<keyword id="KW-1185">Reference proteome</keyword>
<keyword id="KW-0687">Ribonucleoprotein</keyword>
<keyword id="KW-0689">Ribosomal protein</keyword>
<name>RL332_BACLD</name>
<accession>Q65HN7</accession>
<accession>Q62T40</accession>
<proteinExistence type="inferred from homology"/>
<feature type="chain" id="PRO_0000356393" description="Large ribosomal subunit protein bL33B">
    <location>
        <begin position="1"/>
        <end position="49"/>
    </location>
</feature>
<organism>
    <name type="scientific">Bacillus licheniformis (strain ATCC 14580 / DSM 13 / JCM 2505 / CCUG 7422 / NBRC 12200 / NCIMB 9375 / NCTC 10341 / NRRL NRS-1264 / Gibson 46)</name>
    <dbReference type="NCBI Taxonomy" id="279010"/>
    <lineage>
        <taxon>Bacteria</taxon>
        <taxon>Bacillati</taxon>
        <taxon>Bacillota</taxon>
        <taxon>Bacilli</taxon>
        <taxon>Bacillales</taxon>
        <taxon>Bacillaceae</taxon>
        <taxon>Bacillus</taxon>
    </lineage>
</organism>
<evidence type="ECO:0000255" key="1">
    <source>
        <dbReference type="HAMAP-Rule" id="MF_00294"/>
    </source>
</evidence>
<reference key="1">
    <citation type="journal article" date="2004" name="J. Mol. Microbiol. Biotechnol.">
        <title>The complete genome sequence of Bacillus licheniformis DSM13, an organism with great industrial potential.</title>
        <authorList>
            <person name="Veith B."/>
            <person name="Herzberg C."/>
            <person name="Steckel S."/>
            <person name="Feesche J."/>
            <person name="Maurer K.H."/>
            <person name="Ehrenreich P."/>
            <person name="Baeumer S."/>
            <person name="Henne A."/>
            <person name="Liesegang H."/>
            <person name="Merkl R."/>
            <person name="Ehrenreich A."/>
            <person name="Gottschalk G."/>
        </authorList>
    </citation>
    <scope>NUCLEOTIDE SEQUENCE [LARGE SCALE GENOMIC DNA]</scope>
    <source>
        <strain>ATCC 14580 / DSM 13 / JCM 2505 / CCUG 7422 / NBRC 12200 / NCIMB 9375 / NCTC 10341 / NRRL NRS-1264 / Gibson 46</strain>
    </source>
</reference>
<reference key="2">
    <citation type="journal article" date="2004" name="Genome Biol.">
        <title>Complete genome sequence of the industrial bacterium Bacillus licheniformis and comparisons with closely related Bacillus species.</title>
        <authorList>
            <person name="Rey M.W."/>
            <person name="Ramaiya P."/>
            <person name="Nelson B.A."/>
            <person name="Brody-Karpin S.D."/>
            <person name="Zaretsky E.J."/>
            <person name="Tang M."/>
            <person name="Lopez de Leon A."/>
            <person name="Xiang H."/>
            <person name="Gusti V."/>
            <person name="Clausen I.G."/>
            <person name="Olsen P.B."/>
            <person name="Rasmussen M.D."/>
            <person name="Andersen J.T."/>
            <person name="Joergensen P.L."/>
            <person name="Larsen T.S."/>
            <person name="Sorokin A."/>
            <person name="Bolotin A."/>
            <person name="Lapidus A."/>
            <person name="Galleron N."/>
            <person name="Ehrlich S.D."/>
            <person name="Berka R.M."/>
        </authorList>
    </citation>
    <scope>NUCLEOTIDE SEQUENCE [LARGE SCALE GENOMIC DNA]</scope>
    <source>
        <strain>ATCC 14580 / DSM 13 / JCM 2505 / CCUG 7422 / NBRC 12200 / NCIMB 9375 / NCTC 10341 / NRRL NRS-1264 / Gibson 46</strain>
    </source>
</reference>
<dbReference type="EMBL" id="CP000002">
    <property type="protein sequence ID" value="AAU24069.1"/>
    <property type="molecule type" value="Genomic_DNA"/>
</dbReference>
<dbReference type="EMBL" id="AE017333">
    <property type="protein sequence ID" value="AAU41427.1"/>
    <property type="molecule type" value="Genomic_DNA"/>
</dbReference>
<dbReference type="SMR" id="Q65HN7"/>
<dbReference type="STRING" id="279010.BL05257"/>
<dbReference type="KEGG" id="bld:BLi02553"/>
<dbReference type="KEGG" id="bli:BL05257"/>
<dbReference type="eggNOG" id="COG0267">
    <property type="taxonomic scope" value="Bacteria"/>
</dbReference>
<dbReference type="HOGENOM" id="CLU_190949_0_1_9"/>
<dbReference type="Proteomes" id="UP000000606">
    <property type="component" value="Chromosome"/>
</dbReference>
<dbReference type="GO" id="GO:0005737">
    <property type="term" value="C:cytoplasm"/>
    <property type="evidence" value="ECO:0007669"/>
    <property type="project" value="UniProtKB-ARBA"/>
</dbReference>
<dbReference type="GO" id="GO:1990904">
    <property type="term" value="C:ribonucleoprotein complex"/>
    <property type="evidence" value="ECO:0007669"/>
    <property type="project" value="UniProtKB-KW"/>
</dbReference>
<dbReference type="GO" id="GO:0005840">
    <property type="term" value="C:ribosome"/>
    <property type="evidence" value="ECO:0007669"/>
    <property type="project" value="UniProtKB-KW"/>
</dbReference>
<dbReference type="GO" id="GO:0003735">
    <property type="term" value="F:structural constituent of ribosome"/>
    <property type="evidence" value="ECO:0007669"/>
    <property type="project" value="InterPro"/>
</dbReference>
<dbReference type="GO" id="GO:0006412">
    <property type="term" value="P:translation"/>
    <property type="evidence" value="ECO:0007669"/>
    <property type="project" value="UniProtKB-UniRule"/>
</dbReference>
<dbReference type="Gene3D" id="2.20.28.120">
    <property type="entry name" value="Ribosomal protein L33"/>
    <property type="match status" value="1"/>
</dbReference>
<dbReference type="HAMAP" id="MF_00294">
    <property type="entry name" value="Ribosomal_bL33"/>
    <property type="match status" value="1"/>
</dbReference>
<dbReference type="InterPro" id="IPR001705">
    <property type="entry name" value="Ribosomal_bL33"/>
</dbReference>
<dbReference type="InterPro" id="IPR018264">
    <property type="entry name" value="Ribosomal_bL33_CS"/>
</dbReference>
<dbReference type="InterPro" id="IPR038584">
    <property type="entry name" value="Ribosomal_bL33_sf"/>
</dbReference>
<dbReference type="InterPro" id="IPR011332">
    <property type="entry name" value="Ribosomal_zn-bd"/>
</dbReference>
<dbReference type="NCBIfam" id="NF001764">
    <property type="entry name" value="PRK00504.1"/>
    <property type="match status" value="1"/>
</dbReference>
<dbReference type="NCBIfam" id="NF001860">
    <property type="entry name" value="PRK00595.1"/>
    <property type="match status" value="1"/>
</dbReference>
<dbReference type="NCBIfam" id="TIGR01023">
    <property type="entry name" value="rpmG_bact"/>
    <property type="match status" value="1"/>
</dbReference>
<dbReference type="PANTHER" id="PTHR43168">
    <property type="entry name" value="50S RIBOSOMAL PROTEIN L33, CHLOROPLASTIC"/>
    <property type="match status" value="1"/>
</dbReference>
<dbReference type="PANTHER" id="PTHR43168:SF2">
    <property type="entry name" value="LARGE RIBOSOMAL SUBUNIT PROTEIN BL33C"/>
    <property type="match status" value="1"/>
</dbReference>
<dbReference type="Pfam" id="PF00471">
    <property type="entry name" value="Ribosomal_L33"/>
    <property type="match status" value="1"/>
</dbReference>
<dbReference type="SUPFAM" id="SSF57829">
    <property type="entry name" value="Zn-binding ribosomal proteins"/>
    <property type="match status" value="1"/>
</dbReference>
<dbReference type="PROSITE" id="PS00582">
    <property type="entry name" value="RIBOSOMAL_L33"/>
    <property type="match status" value="1"/>
</dbReference>
<gene>
    <name evidence="1" type="primary">rpmG2</name>
    <name type="synonym">rpmGAA</name>
    <name type="ordered locus">BLi02553</name>
    <name type="ordered locus">BL05257</name>
</gene>
<protein>
    <recommendedName>
        <fullName evidence="1">Large ribosomal subunit protein bL33B</fullName>
    </recommendedName>
    <alternativeName>
        <fullName evidence="1">50S ribosomal protein L33 2</fullName>
    </alternativeName>
</protein>
<comment type="similarity">
    <text evidence="1">Belongs to the bacterial ribosomal protein bL33 family.</text>
</comment>
<sequence length="49" mass="5913">MRVKITLACTETGDRNYITTKNKRTNPDRLELKKYSPRLKRHTIHRETK</sequence>